<reference key="1">
    <citation type="submission" date="2008-04" db="EMBL/GenBank/DDBJ databases">
        <title>Complete sequence of Clostridium botulinum strain Eklund.</title>
        <authorList>
            <person name="Brinkac L.M."/>
            <person name="Brown J.L."/>
            <person name="Bruce D."/>
            <person name="Detter C."/>
            <person name="Munk C."/>
            <person name="Smith L.A."/>
            <person name="Smith T.J."/>
            <person name="Sutton G."/>
            <person name="Brettin T.S."/>
        </authorList>
    </citation>
    <scope>NUCLEOTIDE SEQUENCE [LARGE SCALE GENOMIC DNA]</scope>
    <source>
        <strain>Eklund 17B / Type B</strain>
    </source>
</reference>
<protein>
    <recommendedName>
        <fullName evidence="1">tRNA-2-methylthio-N(6)-dimethylallyladenosine synthase</fullName>
        <ecNumber evidence="1">2.8.4.3</ecNumber>
    </recommendedName>
    <alternativeName>
        <fullName evidence="1">(Dimethylallyl)adenosine tRNA methylthiotransferase MiaB</fullName>
    </alternativeName>
    <alternativeName>
        <fullName evidence="1">tRNA-i(6)A37 methylthiotransferase</fullName>
    </alternativeName>
</protein>
<keyword id="KW-0004">4Fe-4S</keyword>
<keyword id="KW-0963">Cytoplasm</keyword>
<keyword id="KW-0408">Iron</keyword>
<keyword id="KW-0411">Iron-sulfur</keyword>
<keyword id="KW-0479">Metal-binding</keyword>
<keyword id="KW-0949">S-adenosyl-L-methionine</keyword>
<keyword id="KW-0808">Transferase</keyword>
<keyword id="KW-0819">tRNA processing</keyword>
<name>MIAB_CLOBB</name>
<organism>
    <name type="scientific">Clostridium botulinum (strain Eklund 17B / Type B)</name>
    <dbReference type="NCBI Taxonomy" id="935198"/>
    <lineage>
        <taxon>Bacteria</taxon>
        <taxon>Bacillati</taxon>
        <taxon>Bacillota</taxon>
        <taxon>Clostridia</taxon>
        <taxon>Eubacteriales</taxon>
        <taxon>Clostridiaceae</taxon>
        <taxon>Clostridium</taxon>
    </lineage>
</organism>
<comment type="function">
    <text evidence="1">Catalyzes the methylthiolation of N6-(dimethylallyl)adenosine (i(6)A), leading to the formation of 2-methylthio-N6-(dimethylallyl)adenosine (ms(2)i(6)A) at position 37 in tRNAs that read codons beginning with uridine.</text>
</comment>
<comment type="catalytic activity">
    <reaction evidence="1">
        <text>N(6)-dimethylallyladenosine(37) in tRNA + (sulfur carrier)-SH + AH2 + 2 S-adenosyl-L-methionine = 2-methylsulfanyl-N(6)-dimethylallyladenosine(37) in tRNA + (sulfur carrier)-H + 5'-deoxyadenosine + L-methionine + A + S-adenosyl-L-homocysteine + 2 H(+)</text>
        <dbReference type="Rhea" id="RHEA:37067"/>
        <dbReference type="Rhea" id="RHEA-COMP:10375"/>
        <dbReference type="Rhea" id="RHEA-COMP:10376"/>
        <dbReference type="Rhea" id="RHEA-COMP:14737"/>
        <dbReference type="Rhea" id="RHEA-COMP:14739"/>
        <dbReference type="ChEBI" id="CHEBI:13193"/>
        <dbReference type="ChEBI" id="CHEBI:15378"/>
        <dbReference type="ChEBI" id="CHEBI:17319"/>
        <dbReference type="ChEBI" id="CHEBI:17499"/>
        <dbReference type="ChEBI" id="CHEBI:29917"/>
        <dbReference type="ChEBI" id="CHEBI:57844"/>
        <dbReference type="ChEBI" id="CHEBI:57856"/>
        <dbReference type="ChEBI" id="CHEBI:59789"/>
        <dbReference type="ChEBI" id="CHEBI:64428"/>
        <dbReference type="ChEBI" id="CHEBI:74415"/>
        <dbReference type="ChEBI" id="CHEBI:74417"/>
        <dbReference type="EC" id="2.8.4.3"/>
    </reaction>
</comment>
<comment type="cofactor">
    <cofactor evidence="1">
        <name>[4Fe-4S] cluster</name>
        <dbReference type="ChEBI" id="CHEBI:49883"/>
    </cofactor>
    <text evidence="1">Binds 2 [4Fe-4S] clusters. One cluster is coordinated with 3 cysteines and an exchangeable S-adenosyl-L-methionine.</text>
</comment>
<comment type="subunit">
    <text evidence="1">Monomer.</text>
</comment>
<comment type="subcellular location">
    <subcellularLocation>
        <location evidence="1">Cytoplasm</location>
    </subcellularLocation>
</comment>
<comment type="similarity">
    <text evidence="1">Belongs to the methylthiotransferase family. MiaB subfamily.</text>
</comment>
<proteinExistence type="inferred from homology"/>
<sequence length="456" mass="52396">MIKFDDKQLNNIVEQDGDKHFFIETWGCQMNEEDSEKLSGMLKSQGYEETENRDEASIVIFNTCCVRENAENKVFGNLGRLKNQKEKNPNLIIALCGCMMQQKGMADEILSRFPYVDIIFGTHNAYKFPEYLHRVQVEGVQVKEIFDKETEIVEGVPIDRKSNVKAFVTIMYGCNNFCTYCVVPYVRGRERSRRPEDIENEIKELVSSGYKEITLLGQNVNSYGKGLEEEITFAQLLRRINEIDGLERLRFMTSHPKDLTLDVVYAIRDCDKLCEQIHLPVQSGSNEILQKMNRHYNKEQYLELAKKIREEIPDVTFSTDIIVGFPGETEEDFEETINLVKEVRYDAAFTFIYSRRNHTPADKMENQIPDDVKHDRFNRLVAAVNEGIVVGNKAAEGKIYEVLVEGTSKNNENKLTGRTRNAKLVNFDGCKEMIGKLVKVKIIEAKSFSLVGEVVE</sequence>
<gene>
    <name evidence="1" type="primary">miaB</name>
    <name type="ordered locus">CLL_A1808</name>
</gene>
<dbReference type="EC" id="2.8.4.3" evidence="1"/>
<dbReference type="EMBL" id="CP001056">
    <property type="protein sequence ID" value="ACD24794.1"/>
    <property type="molecule type" value="Genomic_DNA"/>
</dbReference>
<dbReference type="SMR" id="B2TIA8"/>
<dbReference type="KEGG" id="cbk:CLL_A1808"/>
<dbReference type="PATRIC" id="fig|935198.13.peg.1754"/>
<dbReference type="HOGENOM" id="CLU_018697_2_0_9"/>
<dbReference type="Proteomes" id="UP000001195">
    <property type="component" value="Chromosome"/>
</dbReference>
<dbReference type="GO" id="GO:0005829">
    <property type="term" value="C:cytosol"/>
    <property type="evidence" value="ECO:0007669"/>
    <property type="project" value="TreeGrafter"/>
</dbReference>
<dbReference type="GO" id="GO:0051539">
    <property type="term" value="F:4 iron, 4 sulfur cluster binding"/>
    <property type="evidence" value="ECO:0007669"/>
    <property type="project" value="UniProtKB-UniRule"/>
</dbReference>
<dbReference type="GO" id="GO:0046872">
    <property type="term" value="F:metal ion binding"/>
    <property type="evidence" value="ECO:0007669"/>
    <property type="project" value="UniProtKB-KW"/>
</dbReference>
<dbReference type="GO" id="GO:0035597">
    <property type="term" value="F:N6-isopentenyladenosine methylthiotransferase activity"/>
    <property type="evidence" value="ECO:0007669"/>
    <property type="project" value="TreeGrafter"/>
</dbReference>
<dbReference type="CDD" id="cd01335">
    <property type="entry name" value="Radical_SAM"/>
    <property type="match status" value="1"/>
</dbReference>
<dbReference type="FunFam" id="3.40.50.12160:FF:000006">
    <property type="entry name" value="tRNA-2-methylthio-N(6)-dimethylallyladenosine synthase"/>
    <property type="match status" value="1"/>
</dbReference>
<dbReference type="FunFam" id="3.80.30.20:FF:000001">
    <property type="entry name" value="tRNA-2-methylthio-N(6)-dimethylallyladenosine synthase 2"/>
    <property type="match status" value="1"/>
</dbReference>
<dbReference type="Gene3D" id="3.40.50.12160">
    <property type="entry name" value="Methylthiotransferase, N-terminal domain"/>
    <property type="match status" value="1"/>
</dbReference>
<dbReference type="Gene3D" id="3.80.30.20">
    <property type="entry name" value="tm_1862 like domain"/>
    <property type="match status" value="1"/>
</dbReference>
<dbReference type="HAMAP" id="MF_01864">
    <property type="entry name" value="tRNA_metthiotr_MiaB"/>
    <property type="match status" value="1"/>
</dbReference>
<dbReference type="InterPro" id="IPR006638">
    <property type="entry name" value="Elp3/MiaA/NifB-like_rSAM"/>
</dbReference>
<dbReference type="InterPro" id="IPR005839">
    <property type="entry name" value="Methylthiotransferase"/>
</dbReference>
<dbReference type="InterPro" id="IPR020612">
    <property type="entry name" value="Methylthiotransferase_CS"/>
</dbReference>
<dbReference type="InterPro" id="IPR013848">
    <property type="entry name" value="Methylthiotransferase_N"/>
</dbReference>
<dbReference type="InterPro" id="IPR038135">
    <property type="entry name" value="Methylthiotransferase_N_sf"/>
</dbReference>
<dbReference type="InterPro" id="IPR006463">
    <property type="entry name" value="MiaB_methiolase"/>
</dbReference>
<dbReference type="InterPro" id="IPR007197">
    <property type="entry name" value="rSAM"/>
</dbReference>
<dbReference type="InterPro" id="IPR023404">
    <property type="entry name" value="rSAM_horseshoe"/>
</dbReference>
<dbReference type="InterPro" id="IPR002792">
    <property type="entry name" value="TRAM_dom"/>
</dbReference>
<dbReference type="NCBIfam" id="TIGR01574">
    <property type="entry name" value="miaB-methiolase"/>
    <property type="match status" value="1"/>
</dbReference>
<dbReference type="NCBIfam" id="TIGR00089">
    <property type="entry name" value="MiaB/RimO family radical SAM methylthiotransferase"/>
    <property type="match status" value="1"/>
</dbReference>
<dbReference type="PANTHER" id="PTHR43020">
    <property type="entry name" value="CDK5 REGULATORY SUBUNIT-ASSOCIATED PROTEIN 1"/>
    <property type="match status" value="1"/>
</dbReference>
<dbReference type="PANTHER" id="PTHR43020:SF2">
    <property type="entry name" value="MITOCHONDRIAL TRNA METHYLTHIOTRANSFERASE CDK5RAP1"/>
    <property type="match status" value="1"/>
</dbReference>
<dbReference type="Pfam" id="PF04055">
    <property type="entry name" value="Radical_SAM"/>
    <property type="match status" value="1"/>
</dbReference>
<dbReference type="Pfam" id="PF01938">
    <property type="entry name" value="TRAM"/>
    <property type="match status" value="1"/>
</dbReference>
<dbReference type="Pfam" id="PF00919">
    <property type="entry name" value="UPF0004"/>
    <property type="match status" value="1"/>
</dbReference>
<dbReference type="SFLD" id="SFLDF00273">
    <property type="entry name" value="(dimethylallyl)adenosine_tRNA"/>
    <property type="match status" value="1"/>
</dbReference>
<dbReference type="SFLD" id="SFLDG01082">
    <property type="entry name" value="B12-binding_domain_containing"/>
    <property type="match status" value="1"/>
</dbReference>
<dbReference type="SFLD" id="SFLDG01061">
    <property type="entry name" value="methylthiotransferase"/>
    <property type="match status" value="1"/>
</dbReference>
<dbReference type="SMART" id="SM00729">
    <property type="entry name" value="Elp3"/>
    <property type="match status" value="1"/>
</dbReference>
<dbReference type="SUPFAM" id="SSF102114">
    <property type="entry name" value="Radical SAM enzymes"/>
    <property type="match status" value="1"/>
</dbReference>
<dbReference type="PROSITE" id="PS51449">
    <property type="entry name" value="MTTASE_N"/>
    <property type="match status" value="1"/>
</dbReference>
<dbReference type="PROSITE" id="PS01278">
    <property type="entry name" value="MTTASE_RADICAL"/>
    <property type="match status" value="1"/>
</dbReference>
<dbReference type="PROSITE" id="PS51918">
    <property type="entry name" value="RADICAL_SAM"/>
    <property type="match status" value="1"/>
</dbReference>
<dbReference type="PROSITE" id="PS50926">
    <property type="entry name" value="TRAM"/>
    <property type="match status" value="1"/>
</dbReference>
<accession>B2TIA8</accession>
<evidence type="ECO:0000255" key="1">
    <source>
        <dbReference type="HAMAP-Rule" id="MF_01864"/>
    </source>
</evidence>
<evidence type="ECO:0000255" key="2">
    <source>
        <dbReference type="PROSITE-ProRule" id="PRU01266"/>
    </source>
</evidence>
<feature type="chain" id="PRO_0000374223" description="tRNA-2-methylthio-N(6)-dimethylallyladenosine synthase">
    <location>
        <begin position="1"/>
        <end position="456"/>
    </location>
</feature>
<feature type="domain" description="MTTase N-terminal" evidence="1">
    <location>
        <begin position="19"/>
        <end position="137"/>
    </location>
</feature>
<feature type="domain" description="Radical SAM core" evidence="2">
    <location>
        <begin position="160"/>
        <end position="392"/>
    </location>
</feature>
<feature type="domain" description="TRAM" evidence="1">
    <location>
        <begin position="393"/>
        <end position="456"/>
    </location>
</feature>
<feature type="binding site" evidence="1">
    <location>
        <position position="28"/>
    </location>
    <ligand>
        <name>[4Fe-4S] cluster</name>
        <dbReference type="ChEBI" id="CHEBI:49883"/>
        <label>1</label>
    </ligand>
</feature>
<feature type="binding site" evidence="1">
    <location>
        <position position="64"/>
    </location>
    <ligand>
        <name>[4Fe-4S] cluster</name>
        <dbReference type="ChEBI" id="CHEBI:49883"/>
        <label>1</label>
    </ligand>
</feature>
<feature type="binding site" evidence="1">
    <location>
        <position position="98"/>
    </location>
    <ligand>
        <name>[4Fe-4S] cluster</name>
        <dbReference type="ChEBI" id="CHEBI:49883"/>
        <label>1</label>
    </ligand>
</feature>
<feature type="binding site" evidence="1">
    <location>
        <position position="174"/>
    </location>
    <ligand>
        <name>[4Fe-4S] cluster</name>
        <dbReference type="ChEBI" id="CHEBI:49883"/>
        <label>2</label>
        <note>4Fe-4S-S-AdoMet</note>
    </ligand>
</feature>
<feature type="binding site" evidence="1">
    <location>
        <position position="178"/>
    </location>
    <ligand>
        <name>[4Fe-4S] cluster</name>
        <dbReference type="ChEBI" id="CHEBI:49883"/>
        <label>2</label>
        <note>4Fe-4S-S-AdoMet</note>
    </ligand>
</feature>
<feature type="binding site" evidence="1">
    <location>
        <position position="181"/>
    </location>
    <ligand>
        <name>[4Fe-4S] cluster</name>
        <dbReference type="ChEBI" id="CHEBI:49883"/>
        <label>2</label>
        <note>4Fe-4S-S-AdoMet</note>
    </ligand>
</feature>